<name>MURA_NOSS1</name>
<gene>
    <name evidence="1" type="primary">murA</name>
    <name type="ordered locus">all0174</name>
</gene>
<protein>
    <recommendedName>
        <fullName evidence="1">UDP-N-acetylglucosamine 1-carboxyvinyltransferase</fullName>
        <ecNumber evidence="1">2.5.1.7</ecNumber>
    </recommendedName>
    <alternativeName>
        <fullName evidence="1">Enoylpyruvate transferase</fullName>
    </alternativeName>
    <alternativeName>
        <fullName evidence="1">UDP-N-acetylglucosamine enolpyruvyl transferase</fullName>
        <shortName evidence="1">EPT</shortName>
    </alternativeName>
</protein>
<reference key="1">
    <citation type="journal article" date="2001" name="DNA Res.">
        <title>Complete genomic sequence of the filamentous nitrogen-fixing cyanobacterium Anabaena sp. strain PCC 7120.</title>
        <authorList>
            <person name="Kaneko T."/>
            <person name="Nakamura Y."/>
            <person name="Wolk C.P."/>
            <person name="Kuritz T."/>
            <person name="Sasamoto S."/>
            <person name="Watanabe A."/>
            <person name="Iriguchi M."/>
            <person name="Ishikawa A."/>
            <person name="Kawashima K."/>
            <person name="Kimura T."/>
            <person name="Kishida Y."/>
            <person name="Kohara M."/>
            <person name="Matsumoto M."/>
            <person name="Matsuno A."/>
            <person name="Muraki A."/>
            <person name="Nakazaki N."/>
            <person name="Shimpo S."/>
            <person name="Sugimoto M."/>
            <person name="Takazawa M."/>
            <person name="Yamada M."/>
            <person name="Yasuda M."/>
            <person name="Tabata S."/>
        </authorList>
    </citation>
    <scope>NUCLEOTIDE SEQUENCE [LARGE SCALE GENOMIC DNA]</scope>
    <source>
        <strain>PCC 7120 / SAG 25.82 / UTEX 2576</strain>
    </source>
</reference>
<keyword id="KW-0131">Cell cycle</keyword>
<keyword id="KW-0132">Cell division</keyword>
<keyword id="KW-0133">Cell shape</keyword>
<keyword id="KW-0961">Cell wall biogenesis/degradation</keyword>
<keyword id="KW-0963">Cytoplasm</keyword>
<keyword id="KW-0573">Peptidoglycan synthesis</keyword>
<keyword id="KW-0670">Pyruvate</keyword>
<keyword id="KW-1185">Reference proteome</keyword>
<keyword id="KW-0808">Transferase</keyword>
<dbReference type="EC" id="2.5.1.7" evidence="1"/>
<dbReference type="EMBL" id="BA000019">
    <property type="protein sequence ID" value="BAB77698.1"/>
    <property type="molecule type" value="Genomic_DNA"/>
</dbReference>
<dbReference type="PIR" id="AF1828">
    <property type="entry name" value="AF1828"/>
</dbReference>
<dbReference type="RefSeq" id="WP_010994351.1">
    <property type="nucleotide sequence ID" value="NZ_RSCN01000026.1"/>
</dbReference>
<dbReference type="SMR" id="Q8Z0C4"/>
<dbReference type="STRING" id="103690.gene:10492180"/>
<dbReference type="KEGG" id="ana:all0174"/>
<dbReference type="eggNOG" id="COG0766">
    <property type="taxonomic scope" value="Bacteria"/>
</dbReference>
<dbReference type="OrthoDB" id="9803760at2"/>
<dbReference type="UniPathway" id="UPA00219"/>
<dbReference type="Proteomes" id="UP000002483">
    <property type="component" value="Chromosome"/>
</dbReference>
<dbReference type="GO" id="GO:0005737">
    <property type="term" value="C:cytoplasm"/>
    <property type="evidence" value="ECO:0007669"/>
    <property type="project" value="UniProtKB-SubCell"/>
</dbReference>
<dbReference type="GO" id="GO:0008760">
    <property type="term" value="F:UDP-N-acetylglucosamine 1-carboxyvinyltransferase activity"/>
    <property type="evidence" value="ECO:0007669"/>
    <property type="project" value="UniProtKB-UniRule"/>
</dbReference>
<dbReference type="GO" id="GO:0051301">
    <property type="term" value="P:cell division"/>
    <property type="evidence" value="ECO:0007669"/>
    <property type="project" value="UniProtKB-KW"/>
</dbReference>
<dbReference type="GO" id="GO:0071555">
    <property type="term" value="P:cell wall organization"/>
    <property type="evidence" value="ECO:0007669"/>
    <property type="project" value="UniProtKB-KW"/>
</dbReference>
<dbReference type="GO" id="GO:0009252">
    <property type="term" value="P:peptidoglycan biosynthetic process"/>
    <property type="evidence" value="ECO:0007669"/>
    <property type="project" value="UniProtKB-UniRule"/>
</dbReference>
<dbReference type="GO" id="GO:0008360">
    <property type="term" value="P:regulation of cell shape"/>
    <property type="evidence" value="ECO:0007669"/>
    <property type="project" value="UniProtKB-KW"/>
</dbReference>
<dbReference type="GO" id="GO:0019277">
    <property type="term" value="P:UDP-N-acetylgalactosamine biosynthetic process"/>
    <property type="evidence" value="ECO:0007669"/>
    <property type="project" value="InterPro"/>
</dbReference>
<dbReference type="CDD" id="cd01555">
    <property type="entry name" value="UdpNAET"/>
    <property type="match status" value="1"/>
</dbReference>
<dbReference type="FunFam" id="3.65.10.10:FF:000001">
    <property type="entry name" value="UDP-N-acetylglucosamine 1-carboxyvinyltransferase"/>
    <property type="match status" value="1"/>
</dbReference>
<dbReference type="Gene3D" id="3.65.10.10">
    <property type="entry name" value="Enolpyruvate transferase domain"/>
    <property type="match status" value="2"/>
</dbReference>
<dbReference type="HAMAP" id="MF_00111">
    <property type="entry name" value="MurA"/>
    <property type="match status" value="1"/>
</dbReference>
<dbReference type="InterPro" id="IPR001986">
    <property type="entry name" value="Enolpyruvate_Tfrase_dom"/>
</dbReference>
<dbReference type="InterPro" id="IPR036968">
    <property type="entry name" value="Enolpyruvate_Tfrase_sf"/>
</dbReference>
<dbReference type="InterPro" id="IPR050068">
    <property type="entry name" value="MurA_subfamily"/>
</dbReference>
<dbReference type="InterPro" id="IPR013792">
    <property type="entry name" value="RNA3'P_cycl/enolpyr_Trfase_a/b"/>
</dbReference>
<dbReference type="InterPro" id="IPR005750">
    <property type="entry name" value="UDP_GlcNAc_COvinyl_MurA"/>
</dbReference>
<dbReference type="NCBIfam" id="TIGR01072">
    <property type="entry name" value="murA"/>
    <property type="match status" value="1"/>
</dbReference>
<dbReference type="NCBIfam" id="NF006873">
    <property type="entry name" value="PRK09369.1"/>
    <property type="match status" value="1"/>
</dbReference>
<dbReference type="PANTHER" id="PTHR43783">
    <property type="entry name" value="UDP-N-ACETYLGLUCOSAMINE 1-CARBOXYVINYLTRANSFERASE"/>
    <property type="match status" value="1"/>
</dbReference>
<dbReference type="PANTHER" id="PTHR43783:SF1">
    <property type="entry name" value="UDP-N-ACETYLGLUCOSAMINE 1-CARBOXYVINYLTRANSFERASE"/>
    <property type="match status" value="1"/>
</dbReference>
<dbReference type="Pfam" id="PF00275">
    <property type="entry name" value="EPSP_synthase"/>
    <property type="match status" value="1"/>
</dbReference>
<dbReference type="SUPFAM" id="SSF55205">
    <property type="entry name" value="EPT/RTPC-like"/>
    <property type="match status" value="1"/>
</dbReference>
<proteinExistence type="inferred from homology"/>
<evidence type="ECO:0000255" key="1">
    <source>
        <dbReference type="HAMAP-Rule" id="MF_00111"/>
    </source>
</evidence>
<feature type="chain" id="PRO_0000178844" description="UDP-N-acetylglucosamine 1-carboxyvinyltransferase">
    <location>
        <begin position="1"/>
        <end position="447"/>
    </location>
</feature>
<feature type="active site" description="Proton donor" evidence="1">
    <location>
        <position position="121"/>
    </location>
</feature>
<feature type="binding site" evidence="1">
    <location>
        <begin position="27"/>
        <end position="28"/>
    </location>
    <ligand>
        <name>phosphoenolpyruvate</name>
        <dbReference type="ChEBI" id="CHEBI:58702"/>
    </ligand>
</feature>
<feature type="binding site" evidence="1">
    <location>
        <position position="97"/>
    </location>
    <ligand>
        <name>UDP-N-acetyl-alpha-D-glucosamine</name>
        <dbReference type="ChEBI" id="CHEBI:57705"/>
    </ligand>
</feature>
<feature type="binding site" evidence="1">
    <location>
        <begin position="126"/>
        <end position="130"/>
    </location>
    <ligand>
        <name>UDP-N-acetyl-alpha-D-glucosamine</name>
        <dbReference type="ChEBI" id="CHEBI:57705"/>
    </ligand>
</feature>
<feature type="binding site" evidence="1">
    <location>
        <position position="314"/>
    </location>
    <ligand>
        <name>UDP-N-acetyl-alpha-D-glucosamine</name>
        <dbReference type="ChEBI" id="CHEBI:57705"/>
    </ligand>
</feature>
<feature type="binding site" evidence="1">
    <location>
        <position position="336"/>
    </location>
    <ligand>
        <name>UDP-N-acetyl-alpha-D-glucosamine</name>
        <dbReference type="ChEBI" id="CHEBI:57705"/>
    </ligand>
</feature>
<feature type="modified residue" description="2-(S-cysteinyl)pyruvic acid O-phosphothioketal" evidence="1">
    <location>
        <position position="121"/>
    </location>
</feature>
<comment type="function">
    <text evidence="1">Cell wall formation. Adds enolpyruvyl to UDP-N-acetylglucosamine.</text>
</comment>
<comment type="catalytic activity">
    <reaction evidence="1">
        <text>phosphoenolpyruvate + UDP-N-acetyl-alpha-D-glucosamine = UDP-N-acetyl-3-O-(1-carboxyvinyl)-alpha-D-glucosamine + phosphate</text>
        <dbReference type="Rhea" id="RHEA:18681"/>
        <dbReference type="ChEBI" id="CHEBI:43474"/>
        <dbReference type="ChEBI" id="CHEBI:57705"/>
        <dbReference type="ChEBI" id="CHEBI:58702"/>
        <dbReference type="ChEBI" id="CHEBI:68483"/>
        <dbReference type="EC" id="2.5.1.7"/>
    </reaction>
</comment>
<comment type="pathway">
    <text evidence="1">Cell wall biogenesis; peptidoglycan biosynthesis.</text>
</comment>
<comment type="subcellular location">
    <subcellularLocation>
        <location evidence="1">Cytoplasm</location>
    </subcellularLocation>
</comment>
<comment type="similarity">
    <text evidence="1">Belongs to the EPSP synthase family. MurA subfamily.</text>
</comment>
<sequence length="447" mass="47024">MTEADSSVLQIWGGHPLQGHVKISGAKNSALVIMAGALLCSGDCRIRNVPLLADVERMGEVISALGVRLTRQADIIDINASEIKTSKAPYELVTQLRASFFAIGAILARLGVAQMPLPGGCAIGARPVDLHVRGLQAMGAEVQIEHGICNAYVPGSGGRLKGAKIYLDTPSVGATETLMMAATLADGETILENAAREPEVVDLANFCKAMGANIQGAGTSTITIVGVPKLHSVDYSIIPDRIEAGTFLVAGAITRSEITLSSVVPEHLIPLIAKLRDIGVTIIEESPDCLRILPAEILKATDIDTLPHPGFPTDMQAPFMALLTLAEGDSIINESVFENRLRHASELNRLGADIRVKGNTAFVRGVPLLSGAPVIGTDLRASAALVIAGLAAEGKTTIQGLHHLDRGYDQIDVKLQQLGAKILRVREEPANAEVAVNNNVSPASIST</sequence>
<organism>
    <name type="scientific">Nostoc sp. (strain PCC 7120 / SAG 25.82 / UTEX 2576)</name>
    <dbReference type="NCBI Taxonomy" id="103690"/>
    <lineage>
        <taxon>Bacteria</taxon>
        <taxon>Bacillati</taxon>
        <taxon>Cyanobacteriota</taxon>
        <taxon>Cyanophyceae</taxon>
        <taxon>Nostocales</taxon>
        <taxon>Nostocaceae</taxon>
        <taxon>Nostoc</taxon>
    </lineage>
</organism>
<accession>Q8Z0C4</accession>